<evidence type="ECO:0000250" key="1"/>
<evidence type="ECO:0000250" key="2">
    <source>
        <dbReference type="UniProtKB" id="Q9W4C5"/>
    </source>
</evidence>
<evidence type="ECO:0000255" key="3"/>
<evidence type="ECO:0000256" key="4">
    <source>
        <dbReference type="SAM" id="MobiDB-lite"/>
    </source>
</evidence>
<evidence type="ECO:0000305" key="5"/>
<evidence type="ECO:0000312" key="6">
    <source>
        <dbReference type="EMBL" id="EDV45889.1"/>
    </source>
</evidence>
<comment type="function">
    <text evidence="1">Unusual broad substrate spectrum amino acid:sodium cotransporter that promotes absorption of the D isomers of essential amino acids. Neutral amino acids are the preferred substrates, especially methionine and phenylalanine (By similarity).</text>
</comment>
<comment type="subcellular location">
    <subcellularLocation>
        <location evidence="5">Membrane</location>
        <topology evidence="5">Multi-pass membrane protein</topology>
    </subcellularLocation>
</comment>
<comment type="similarity">
    <text evidence="5">Belongs to the sodium:neurotransmitter symporter (SNF) (TC 2.A.22) family.</text>
</comment>
<feature type="chain" id="PRO_0000386582" description="Sodium-dependent nutrient amino acid transporter 1">
    <location>
        <begin position="1"/>
        <end position="641"/>
    </location>
</feature>
<feature type="topological domain" description="Cytoplasmic" evidence="3">
    <location>
        <begin position="1"/>
        <end position="38"/>
    </location>
</feature>
<feature type="transmembrane region" description="Helical; Name=1" evidence="3">
    <location>
        <begin position="39"/>
        <end position="59"/>
    </location>
</feature>
<feature type="transmembrane region" description="Helical; Name=2" evidence="3">
    <location>
        <begin position="72"/>
        <end position="92"/>
    </location>
</feature>
<feature type="transmembrane region" description="Helical; Name=3" evidence="3">
    <location>
        <begin position="109"/>
        <end position="129"/>
    </location>
</feature>
<feature type="transmembrane region" description="Helical; Name=4" evidence="3">
    <location>
        <begin position="229"/>
        <end position="249"/>
    </location>
</feature>
<feature type="transmembrane region" description="Helical; Name=5" evidence="3">
    <location>
        <begin position="258"/>
        <end position="278"/>
    </location>
</feature>
<feature type="transmembrane region" description="Helical; Name=6" evidence="3">
    <location>
        <begin position="307"/>
        <end position="327"/>
    </location>
</feature>
<feature type="transmembrane region" description="Helical; Name=7" evidence="3">
    <location>
        <begin position="341"/>
        <end position="361"/>
    </location>
</feature>
<feature type="transmembrane region" description="Helical; Name=8" evidence="3">
    <location>
        <begin position="401"/>
        <end position="421"/>
    </location>
</feature>
<feature type="transmembrane region" description="Helical; Name=9" evidence="3">
    <location>
        <begin position="441"/>
        <end position="461"/>
    </location>
</feature>
<feature type="transmembrane region" description="Helical; Name=10" evidence="3">
    <location>
        <begin position="474"/>
        <end position="494"/>
    </location>
</feature>
<feature type="transmembrane region" description="Helical; Name=11" evidence="3">
    <location>
        <begin position="516"/>
        <end position="536"/>
    </location>
</feature>
<feature type="transmembrane region" description="Helical; Name=12" evidence="3">
    <location>
        <begin position="552"/>
        <end position="572"/>
    </location>
</feature>
<feature type="region of interest" description="Disordered" evidence="4">
    <location>
        <begin position="1"/>
        <end position="36"/>
    </location>
</feature>
<feature type="compositionally biased region" description="Low complexity" evidence="4">
    <location>
        <begin position="9"/>
        <end position="24"/>
    </location>
</feature>
<feature type="compositionally biased region" description="Basic and acidic residues" evidence="4">
    <location>
        <begin position="25"/>
        <end position="35"/>
    </location>
</feature>
<feature type="glycosylation site" description="N-linked (GlcNAc...) asparagine" evidence="3">
    <location>
        <position position="183"/>
    </location>
</feature>
<feature type="glycosylation site" description="N-linked (GlcNAc...) asparagine" evidence="3">
    <location>
        <position position="188"/>
    </location>
</feature>
<proteinExistence type="inferred from homology"/>
<sequence>MELKGVQPSNGSANGNGTTNAASTEKTDAEKHTPERTNWGNGLEFLMSCISVSVGLGNVWRFPFTAYENGGGAFLIPYIIVLFLIGKPMYYLEMIMGQFTSQGTVKIWSVVPGFVGVGYGQAFGTICIISYYSSLLALTLYYLFVSFQSELPWSYCRDEWTNCVNSRPQEYVDNLLSGVSLANESARNFSAIGSVANEETEKLQSSSELYFLNVVIKEKLDISDGVGDPDWKLTLALLAAWVVIFLVIMRGVKSSGKAAYFLALFPYVVLFVLLIRAVTLEGARDGILFFLEPQWGELLNPTVWKEAVVQCFFSLAVGSGPIIMFASYNRFDHGIYRDAMIVTTLDTLTSLLGGITIFAILGNLAHNLQIENIRDVVRSGTGLAFISYPDAISKFKAVPQLFSVLFFFMLFVLGIGSIVALQSTIVTIICDQFKGLKYWKVALITSACGFLMGLVYVTPGGQWILTLVDFYGGTYVVFILAIFELAGIVWVYGLQNFCDDIEFMCNRRVSLYWRMCWSFFTPVMMIIIFIYSMVTIEPIKYSELYFPEAANIAGWLLFAIGAAQFPLWGLWYVSRHPQGTYWKSLKASMKPSERWGPANPETRREWVIFKNHKAAQRATQKDVSKLGFFWRKLTNFCGSNK</sequence>
<protein>
    <recommendedName>
        <fullName evidence="2">Sodium-dependent nutrient amino acid transporter 1</fullName>
    </recommendedName>
</protein>
<dbReference type="EMBL" id="CH954180">
    <property type="protein sequence ID" value="EDV45889.1"/>
    <property type="molecule type" value="Genomic_DNA"/>
</dbReference>
<dbReference type="SMR" id="B3NV41"/>
<dbReference type="GlyCosmos" id="B3NV41">
    <property type="glycosylation" value="2 sites, No reported glycans"/>
</dbReference>
<dbReference type="EnsemblMetazoa" id="FBtr0138552">
    <property type="protein sequence ID" value="FBpp0137044"/>
    <property type="gene ID" value="FBgn0110711"/>
</dbReference>
<dbReference type="EnsemblMetazoa" id="XM_001976926.3">
    <property type="protein sequence ID" value="XP_001976962.1"/>
    <property type="gene ID" value="LOC6550942"/>
</dbReference>
<dbReference type="EnsemblMetazoa" id="XM_026982334.1">
    <property type="protein sequence ID" value="XP_026838135.1"/>
    <property type="gene ID" value="LOC6550942"/>
</dbReference>
<dbReference type="GeneID" id="6550942"/>
<dbReference type="KEGG" id="der:6550942"/>
<dbReference type="CTD" id="31457"/>
<dbReference type="eggNOG" id="KOG3660">
    <property type="taxonomic scope" value="Eukaryota"/>
</dbReference>
<dbReference type="HOGENOM" id="CLU_006855_9_5_1"/>
<dbReference type="OMA" id="LQNFCDD"/>
<dbReference type="OrthoDB" id="6581954at2759"/>
<dbReference type="PhylomeDB" id="B3NV41"/>
<dbReference type="Proteomes" id="UP000008711">
    <property type="component" value="Unassembled WGS sequence"/>
</dbReference>
<dbReference type="GO" id="GO:0005886">
    <property type="term" value="C:plasma membrane"/>
    <property type="evidence" value="ECO:0000305"/>
    <property type="project" value="UniProtKB"/>
</dbReference>
<dbReference type="GO" id="GO:0005283">
    <property type="term" value="F:amino acid:sodium symporter activity"/>
    <property type="evidence" value="ECO:0000250"/>
    <property type="project" value="UniProtKB"/>
</dbReference>
<dbReference type="GO" id="GO:0042943">
    <property type="term" value="F:D-amino acid transmembrane transporter activity"/>
    <property type="evidence" value="ECO:0000250"/>
    <property type="project" value="UniProtKB"/>
</dbReference>
<dbReference type="GO" id="GO:0015179">
    <property type="term" value="F:L-amino acid transmembrane transporter activity"/>
    <property type="evidence" value="ECO:0007669"/>
    <property type="project" value="EnsemblMetazoa"/>
</dbReference>
<dbReference type="GO" id="GO:0015175">
    <property type="term" value="F:neutral L-amino acid transmembrane transporter activity"/>
    <property type="evidence" value="ECO:0000250"/>
    <property type="project" value="UniProtKB"/>
</dbReference>
<dbReference type="GO" id="GO:0089718">
    <property type="term" value="P:amino acid import across plasma membrane"/>
    <property type="evidence" value="ECO:0007669"/>
    <property type="project" value="TreeGrafter"/>
</dbReference>
<dbReference type="GO" id="GO:0042940">
    <property type="term" value="P:D-amino acid transport"/>
    <property type="evidence" value="ECO:0000250"/>
    <property type="project" value="UniProtKB"/>
</dbReference>
<dbReference type="GO" id="GO:0015804">
    <property type="term" value="P:neutral amino acid transport"/>
    <property type="evidence" value="ECO:0000250"/>
    <property type="project" value="UniProtKB"/>
</dbReference>
<dbReference type="GO" id="GO:0006814">
    <property type="term" value="P:sodium ion transport"/>
    <property type="evidence" value="ECO:0000250"/>
    <property type="project" value="UniProtKB"/>
</dbReference>
<dbReference type="CDD" id="cd10324">
    <property type="entry name" value="SLC6sbd"/>
    <property type="match status" value="1"/>
</dbReference>
<dbReference type="InterPro" id="IPR000175">
    <property type="entry name" value="Na/ntran_symport"/>
</dbReference>
<dbReference type="InterPro" id="IPR037272">
    <property type="entry name" value="SNS_sf"/>
</dbReference>
<dbReference type="NCBIfam" id="NF037979">
    <property type="entry name" value="Na_transp"/>
    <property type="match status" value="1"/>
</dbReference>
<dbReference type="PANTHER" id="PTHR11616:SF321">
    <property type="entry name" value="SODIUM-DEPENDENT NUTRIENT AMINO ACID TRANSPORTER 1-RELATED"/>
    <property type="match status" value="1"/>
</dbReference>
<dbReference type="PANTHER" id="PTHR11616">
    <property type="entry name" value="SODIUM/CHLORIDE DEPENDENT TRANSPORTER"/>
    <property type="match status" value="1"/>
</dbReference>
<dbReference type="Pfam" id="PF00209">
    <property type="entry name" value="SNF"/>
    <property type="match status" value="1"/>
</dbReference>
<dbReference type="PRINTS" id="PR00176">
    <property type="entry name" value="NANEUSMPORT"/>
</dbReference>
<dbReference type="SUPFAM" id="SSF161070">
    <property type="entry name" value="SNF-like"/>
    <property type="match status" value="1"/>
</dbReference>
<dbReference type="PROSITE" id="PS00610">
    <property type="entry name" value="NA_NEUROTRAN_SYMP_1"/>
    <property type="match status" value="1"/>
</dbReference>
<dbReference type="PROSITE" id="PS00754">
    <property type="entry name" value="NA_NEUROTRAN_SYMP_2"/>
    <property type="match status" value="1"/>
</dbReference>
<dbReference type="PROSITE" id="PS50267">
    <property type="entry name" value="NA_NEUROTRAN_SYMP_3"/>
    <property type="match status" value="1"/>
</dbReference>
<reference evidence="6" key="1">
    <citation type="journal article" date="2007" name="Nature">
        <title>Evolution of genes and genomes on the Drosophila phylogeny.</title>
        <authorList>
            <consortium name="Drosophila 12 genomes consortium"/>
        </authorList>
    </citation>
    <scope>NUCLEOTIDE SEQUENCE [LARGE SCALE GENOMIC DNA]</scope>
    <source>
        <strain evidence="6">Tucson 14021-0224.01</strain>
    </source>
</reference>
<gene>
    <name evidence="2" type="primary">NAAT1</name>
    <name type="ORF">GG18498</name>
</gene>
<organism>
    <name type="scientific">Drosophila erecta</name>
    <name type="common">Fruit fly</name>
    <dbReference type="NCBI Taxonomy" id="7220"/>
    <lineage>
        <taxon>Eukaryota</taxon>
        <taxon>Metazoa</taxon>
        <taxon>Ecdysozoa</taxon>
        <taxon>Arthropoda</taxon>
        <taxon>Hexapoda</taxon>
        <taxon>Insecta</taxon>
        <taxon>Pterygota</taxon>
        <taxon>Neoptera</taxon>
        <taxon>Endopterygota</taxon>
        <taxon>Diptera</taxon>
        <taxon>Brachycera</taxon>
        <taxon>Muscomorpha</taxon>
        <taxon>Ephydroidea</taxon>
        <taxon>Drosophilidae</taxon>
        <taxon>Drosophila</taxon>
        <taxon>Sophophora</taxon>
    </lineage>
</organism>
<name>NAAT1_DROER</name>
<keyword id="KW-0029">Amino-acid transport</keyword>
<keyword id="KW-0325">Glycoprotein</keyword>
<keyword id="KW-0406">Ion transport</keyword>
<keyword id="KW-0472">Membrane</keyword>
<keyword id="KW-0915">Sodium</keyword>
<keyword id="KW-0739">Sodium transport</keyword>
<keyword id="KW-0769">Symport</keyword>
<keyword id="KW-0812">Transmembrane</keyword>
<keyword id="KW-1133">Transmembrane helix</keyword>
<keyword id="KW-0813">Transport</keyword>
<accession>B3NV41</accession>